<protein>
    <recommendedName>
        <fullName evidence="1">ATP-dependent Clp protease ATP-binding subunit ClpX</fullName>
    </recommendedName>
</protein>
<gene>
    <name evidence="1" type="primary">clpX</name>
    <name type="ordered locus">ML1477</name>
</gene>
<sequence>MARIGDSGDLLKCSFCGKSQTQVKKLIAGPGVYICDECIDLCNEIIEEELADADDVQLDELPKPVEIREFLEGYVIGQDTAKRTLAVAVYNHYKRIQAGEKGRDSKREPVELAKSNILMLGPTGCGKTYLAQTLAKMLNVPFAIADATALTEAGYVGEDVENILLKLIQAADYDVKRAETGIIYIDEVDKIARKSENPSITRDVSGEGVQQALLKILEGTQASVPPQGGRKHPHQEFIQIDTTNVLFIVAGAFAGLDKIIYERIGKRGLGFGAEVRSKAEIDTTDHFADVMPEDLIKFGLIPEFIGRLPVIASVINLDMESLVKILSEPKNALVKQYTWLFEMDGVELEFTNDALEAVADQAIHRGTGARGLRAIMEEVLLPVMYDIPSRDDVAKVVVTKETVQDNVLPTIVPRKPSRTERRDKSA</sequence>
<evidence type="ECO:0000255" key="1">
    <source>
        <dbReference type="HAMAP-Rule" id="MF_00175"/>
    </source>
</evidence>
<evidence type="ECO:0000255" key="2">
    <source>
        <dbReference type="PROSITE-ProRule" id="PRU01250"/>
    </source>
</evidence>
<feature type="chain" id="PRO_0000160386" description="ATP-dependent Clp protease ATP-binding subunit ClpX">
    <location>
        <begin position="1"/>
        <end position="426"/>
    </location>
</feature>
<feature type="domain" description="ClpX-type ZB" evidence="2">
    <location>
        <begin position="1"/>
        <end position="54"/>
    </location>
</feature>
<feature type="binding site" evidence="2">
    <location>
        <position position="13"/>
    </location>
    <ligand>
        <name>Zn(2+)</name>
        <dbReference type="ChEBI" id="CHEBI:29105"/>
    </ligand>
</feature>
<feature type="binding site" evidence="2">
    <location>
        <position position="16"/>
    </location>
    <ligand>
        <name>Zn(2+)</name>
        <dbReference type="ChEBI" id="CHEBI:29105"/>
    </ligand>
</feature>
<feature type="binding site" evidence="2">
    <location>
        <position position="35"/>
    </location>
    <ligand>
        <name>Zn(2+)</name>
        <dbReference type="ChEBI" id="CHEBI:29105"/>
    </ligand>
</feature>
<feature type="binding site" evidence="2">
    <location>
        <position position="38"/>
    </location>
    <ligand>
        <name>Zn(2+)</name>
        <dbReference type="ChEBI" id="CHEBI:29105"/>
    </ligand>
</feature>
<feature type="binding site" evidence="1">
    <location>
        <begin position="122"/>
        <end position="129"/>
    </location>
    <ligand>
        <name>ATP</name>
        <dbReference type="ChEBI" id="CHEBI:30616"/>
    </ligand>
</feature>
<name>CLPX_MYCLE</name>
<dbReference type="EMBL" id="AL583922">
    <property type="protein sequence ID" value="CAC30427.1"/>
    <property type="molecule type" value="Genomic_DNA"/>
</dbReference>
<dbReference type="PIR" id="F87093">
    <property type="entry name" value="F87093"/>
</dbReference>
<dbReference type="RefSeq" id="NP_302038.1">
    <property type="nucleotide sequence ID" value="NC_002677.1"/>
</dbReference>
<dbReference type="RefSeq" id="WP_010908359.1">
    <property type="nucleotide sequence ID" value="NC_002677.1"/>
</dbReference>
<dbReference type="SMR" id="Q9CBY6"/>
<dbReference type="STRING" id="272631.gene:17575315"/>
<dbReference type="KEGG" id="mle:ML1477"/>
<dbReference type="PATRIC" id="fig|272631.5.peg.2769"/>
<dbReference type="Leproma" id="ML1477"/>
<dbReference type="eggNOG" id="COG1219">
    <property type="taxonomic scope" value="Bacteria"/>
</dbReference>
<dbReference type="HOGENOM" id="CLU_014218_8_2_11"/>
<dbReference type="OrthoDB" id="9804062at2"/>
<dbReference type="Proteomes" id="UP000000806">
    <property type="component" value="Chromosome"/>
</dbReference>
<dbReference type="GO" id="GO:0009376">
    <property type="term" value="C:HslUV protease complex"/>
    <property type="evidence" value="ECO:0007669"/>
    <property type="project" value="TreeGrafter"/>
</dbReference>
<dbReference type="GO" id="GO:0005524">
    <property type="term" value="F:ATP binding"/>
    <property type="evidence" value="ECO:0007669"/>
    <property type="project" value="UniProtKB-UniRule"/>
</dbReference>
<dbReference type="GO" id="GO:0016887">
    <property type="term" value="F:ATP hydrolysis activity"/>
    <property type="evidence" value="ECO:0007669"/>
    <property type="project" value="InterPro"/>
</dbReference>
<dbReference type="GO" id="GO:0140662">
    <property type="term" value="F:ATP-dependent protein folding chaperone"/>
    <property type="evidence" value="ECO:0007669"/>
    <property type="project" value="InterPro"/>
</dbReference>
<dbReference type="GO" id="GO:0046983">
    <property type="term" value="F:protein dimerization activity"/>
    <property type="evidence" value="ECO:0007669"/>
    <property type="project" value="InterPro"/>
</dbReference>
<dbReference type="GO" id="GO:0051082">
    <property type="term" value="F:unfolded protein binding"/>
    <property type="evidence" value="ECO:0007669"/>
    <property type="project" value="UniProtKB-UniRule"/>
</dbReference>
<dbReference type="GO" id="GO:0008270">
    <property type="term" value="F:zinc ion binding"/>
    <property type="evidence" value="ECO:0007669"/>
    <property type="project" value="InterPro"/>
</dbReference>
<dbReference type="GO" id="GO:0051301">
    <property type="term" value="P:cell division"/>
    <property type="evidence" value="ECO:0007669"/>
    <property type="project" value="TreeGrafter"/>
</dbReference>
<dbReference type="GO" id="GO:0051603">
    <property type="term" value="P:proteolysis involved in protein catabolic process"/>
    <property type="evidence" value="ECO:0007669"/>
    <property type="project" value="TreeGrafter"/>
</dbReference>
<dbReference type="CDD" id="cd19497">
    <property type="entry name" value="RecA-like_ClpX"/>
    <property type="match status" value="1"/>
</dbReference>
<dbReference type="FunFam" id="1.10.8.60:FF:000002">
    <property type="entry name" value="ATP-dependent Clp protease ATP-binding subunit ClpX"/>
    <property type="match status" value="1"/>
</dbReference>
<dbReference type="FunFam" id="3.40.50.300:FF:000005">
    <property type="entry name" value="ATP-dependent Clp protease ATP-binding subunit ClpX"/>
    <property type="match status" value="1"/>
</dbReference>
<dbReference type="Gene3D" id="1.10.8.60">
    <property type="match status" value="1"/>
</dbReference>
<dbReference type="Gene3D" id="6.20.220.10">
    <property type="entry name" value="ClpX chaperone, C4-type zinc finger domain"/>
    <property type="match status" value="1"/>
</dbReference>
<dbReference type="Gene3D" id="3.40.50.300">
    <property type="entry name" value="P-loop containing nucleotide triphosphate hydrolases"/>
    <property type="match status" value="1"/>
</dbReference>
<dbReference type="HAMAP" id="MF_00175">
    <property type="entry name" value="ClpX"/>
    <property type="match status" value="1"/>
</dbReference>
<dbReference type="InterPro" id="IPR003593">
    <property type="entry name" value="AAA+_ATPase"/>
</dbReference>
<dbReference type="InterPro" id="IPR050052">
    <property type="entry name" value="ATP-dep_Clp_protease_ClpX"/>
</dbReference>
<dbReference type="InterPro" id="IPR003959">
    <property type="entry name" value="ATPase_AAA_core"/>
</dbReference>
<dbReference type="InterPro" id="IPR019489">
    <property type="entry name" value="Clp_ATPase_C"/>
</dbReference>
<dbReference type="InterPro" id="IPR004487">
    <property type="entry name" value="Clp_protease_ATP-bd_su_ClpX"/>
</dbReference>
<dbReference type="InterPro" id="IPR046425">
    <property type="entry name" value="ClpX_bact"/>
</dbReference>
<dbReference type="InterPro" id="IPR027417">
    <property type="entry name" value="P-loop_NTPase"/>
</dbReference>
<dbReference type="InterPro" id="IPR010603">
    <property type="entry name" value="Znf_CppX_C4"/>
</dbReference>
<dbReference type="InterPro" id="IPR038366">
    <property type="entry name" value="Znf_CppX_C4_sf"/>
</dbReference>
<dbReference type="NCBIfam" id="TIGR00382">
    <property type="entry name" value="clpX"/>
    <property type="match status" value="1"/>
</dbReference>
<dbReference type="NCBIfam" id="NF003745">
    <property type="entry name" value="PRK05342.1"/>
    <property type="match status" value="1"/>
</dbReference>
<dbReference type="PANTHER" id="PTHR48102:SF7">
    <property type="entry name" value="ATP-DEPENDENT CLP PROTEASE ATP-BINDING SUBUNIT CLPX-LIKE, MITOCHONDRIAL"/>
    <property type="match status" value="1"/>
</dbReference>
<dbReference type="PANTHER" id="PTHR48102">
    <property type="entry name" value="ATP-DEPENDENT CLP PROTEASE ATP-BINDING SUBUNIT CLPX-LIKE, MITOCHONDRIAL-RELATED"/>
    <property type="match status" value="1"/>
</dbReference>
<dbReference type="Pfam" id="PF07724">
    <property type="entry name" value="AAA_2"/>
    <property type="match status" value="1"/>
</dbReference>
<dbReference type="Pfam" id="PF10431">
    <property type="entry name" value="ClpB_D2-small"/>
    <property type="match status" value="1"/>
</dbReference>
<dbReference type="Pfam" id="PF06689">
    <property type="entry name" value="zf-C4_ClpX"/>
    <property type="match status" value="1"/>
</dbReference>
<dbReference type="SMART" id="SM00382">
    <property type="entry name" value="AAA"/>
    <property type="match status" value="1"/>
</dbReference>
<dbReference type="SMART" id="SM01086">
    <property type="entry name" value="ClpB_D2-small"/>
    <property type="match status" value="1"/>
</dbReference>
<dbReference type="SMART" id="SM00994">
    <property type="entry name" value="zf-C4_ClpX"/>
    <property type="match status" value="1"/>
</dbReference>
<dbReference type="SUPFAM" id="SSF57716">
    <property type="entry name" value="Glucocorticoid receptor-like (DNA-binding domain)"/>
    <property type="match status" value="1"/>
</dbReference>
<dbReference type="SUPFAM" id="SSF52540">
    <property type="entry name" value="P-loop containing nucleoside triphosphate hydrolases"/>
    <property type="match status" value="1"/>
</dbReference>
<dbReference type="PROSITE" id="PS51902">
    <property type="entry name" value="CLPX_ZB"/>
    <property type="match status" value="1"/>
</dbReference>
<keyword id="KW-0067">ATP-binding</keyword>
<keyword id="KW-0143">Chaperone</keyword>
<keyword id="KW-0479">Metal-binding</keyword>
<keyword id="KW-0547">Nucleotide-binding</keyword>
<keyword id="KW-1185">Reference proteome</keyword>
<keyword id="KW-0862">Zinc</keyword>
<comment type="function">
    <text evidence="1">ATP-dependent specificity component of the Clp protease. It directs the protease to specific substrates. Can perform chaperone functions in the absence of ClpP.</text>
</comment>
<comment type="subunit">
    <text evidence="1">Component of the ClpX-ClpP complex. Forms a hexameric ring that, in the presence of ATP, binds to fourteen ClpP subunits assembled into a disk-like structure with a central cavity, resembling the structure of eukaryotic proteasomes.</text>
</comment>
<comment type="similarity">
    <text evidence="1">Belongs to the ClpX chaperone family.</text>
</comment>
<accession>Q9CBY6</accession>
<reference key="1">
    <citation type="journal article" date="2001" name="Nature">
        <title>Massive gene decay in the leprosy bacillus.</title>
        <authorList>
            <person name="Cole S.T."/>
            <person name="Eiglmeier K."/>
            <person name="Parkhill J."/>
            <person name="James K.D."/>
            <person name="Thomson N.R."/>
            <person name="Wheeler P.R."/>
            <person name="Honore N."/>
            <person name="Garnier T."/>
            <person name="Churcher C.M."/>
            <person name="Harris D.E."/>
            <person name="Mungall K.L."/>
            <person name="Basham D."/>
            <person name="Brown D."/>
            <person name="Chillingworth T."/>
            <person name="Connor R."/>
            <person name="Davies R.M."/>
            <person name="Devlin K."/>
            <person name="Duthoy S."/>
            <person name="Feltwell T."/>
            <person name="Fraser A."/>
            <person name="Hamlin N."/>
            <person name="Holroyd S."/>
            <person name="Hornsby T."/>
            <person name="Jagels K."/>
            <person name="Lacroix C."/>
            <person name="Maclean J."/>
            <person name="Moule S."/>
            <person name="Murphy L.D."/>
            <person name="Oliver K."/>
            <person name="Quail M.A."/>
            <person name="Rajandream M.A."/>
            <person name="Rutherford K.M."/>
            <person name="Rutter S."/>
            <person name="Seeger K."/>
            <person name="Simon S."/>
            <person name="Simmonds M."/>
            <person name="Skelton J."/>
            <person name="Squares R."/>
            <person name="Squares S."/>
            <person name="Stevens K."/>
            <person name="Taylor K."/>
            <person name="Whitehead S."/>
            <person name="Woodward J.R."/>
            <person name="Barrell B.G."/>
        </authorList>
    </citation>
    <scope>NUCLEOTIDE SEQUENCE [LARGE SCALE GENOMIC DNA]</scope>
    <source>
        <strain>TN</strain>
    </source>
</reference>
<organism>
    <name type="scientific">Mycobacterium leprae (strain TN)</name>
    <dbReference type="NCBI Taxonomy" id="272631"/>
    <lineage>
        <taxon>Bacteria</taxon>
        <taxon>Bacillati</taxon>
        <taxon>Actinomycetota</taxon>
        <taxon>Actinomycetes</taxon>
        <taxon>Mycobacteriales</taxon>
        <taxon>Mycobacteriaceae</taxon>
        <taxon>Mycobacterium</taxon>
    </lineage>
</organism>
<proteinExistence type="inferred from homology"/>